<organism>
    <name type="scientific">Blackcurrant reversion association virus</name>
    <name type="common">BRAV</name>
    <dbReference type="NCBI Taxonomy" id="65743"/>
    <lineage>
        <taxon>Viruses</taxon>
        <taxon>Riboviria</taxon>
        <taxon>Orthornavirae</taxon>
        <taxon>Pisuviricota</taxon>
        <taxon>Pisoniviricetes</taxon>
        <taxon>Picornavirales</taxon>
        <taxon>Secoviridae</taxon>
        <taxon>Comovirinae</taxon>
        <taxon>Nepovirus</taxon>
        <taxon>Nepovirus ribis</taxon>
    </lineage>
</organism>
<reference key="1">
    <citation type="journal article" date="1999" name="Virus Res.">
        <title>The complete nucleotide sequence of RNA2 of blackcurrant reversion nepovirus.</title>
        <authorList>
            <person name="Latvala-Kilby S."/>
            <person name="Lehto K."/>
        </authorList>
    </citation>
    <scope>NUCLEOTIDE SEQUENCE [MRNA]</scope>
</reference>
<reference key="2">
    <citation type="journal article" date="1998" name="Virus Res.">
        <title>Characterization of the coat protein gene of mite-transmitted blackcurrant reversion associated nepovirus.</title>
        <authorList>
            <person name="Latvala S."/>
            <person name="Susi P."/>
            <person name="Kalkkinen N."/>
            <person name="Lehto K."/>
        </authorList>
    </citation>
    <scope>NUCLEOTIDE SEQUENCE [MRNA] OF 1045-1626</scope>
    <scope>PROTEIN SEQUENCE OF 1094-1103</scope>
</reference>
<name>POL2_BRAV</name>
<evidence type="ECO:0000250" key="1"/>
<evidence type="ECO:0000256" key="2">
    <source>
        <dbReference type="SAM" id="MobiDB-lite"/>
    </source>
</evidence>
<evidence type="ECO:0000305" key="3"/>
<keyword id="KW-0167">Capsid protein</keyword>
<keyword id="KW-0903">Direct protein sequencing</keyword>
<keyword id="KW-1031">Host cell junction</keyword>
<keyword id="KW-0813">Transport</keyword>
<keyword id="KW-0916">Viral movement protein</keyword>
<keyword id="KW-0946">Virion</keyword>
<organismHost>
    <name type="scientific">Ribes nigrum</name>
    <name type="common">European black currant</name>
    <dbReference type="NCBI Taxonomy" id="78511"/>
</organismHost>
<proteinExistence type="evidence at protein level"/>
<accession>Q9YK98</accession>
<sequence>MSESGNTTSMPGCGRMCALRSTWSKRAFLVACKDGALTSDGRCPQYGCGALVSITKGVQQPKKTASAKVVKCLCWVQPARWCEKHSKGPASPNGSVTTKRSNSARAAPAPLPYKKQTCDVVVTVGPLELVYPALVSEELPTPVAATPTKVEEVPIPELPLWLAPAWMVEQPYAATPEVLCLTQREEFALLKKRLTRKGKLLQRRATHARFEARAALARVRAATQRKVEEVTALVIKGRRILAAHQLLRELEEVAPLSQAQEQLVASSCAAAAARQEECASFLRRAKAWRKSISATPPVAFATAVASKVVSATMPWAHLGLSLGGLLAVPTLDGTLGAKQWNAKTIATWVLKPVVSCVQSVHAKVRDWLHSQPEVGVTNTKVPLVLPEVCLGVLSPPSLSEEIVDNPQETSQSGIWHPEMGVRNIYVFHDDSWETSPEEDENYTYTFSRQCGIPYLLVEGRGAEERKNTILGWDFSLHNDGEFEFLPSPEEGYTKELVTPVALEEEDKYSTASSCGFFSLDDVSSAITIQCPGLLSADADVHFFDGPGYRCSSRPRDFRPPVVRGCDYESRVKASIQRKIENPLQERFITVLREKRKKNKKKEFHSFSACFAFKRKQIQWPPTPNEMVNEWEEYCIAQAWLPFEVVVTDEIEDVTPLYPGGRDYNCNSQLLFPLAPLSTVYCDDSCFHPNDGWTTDGNGKHFRLSPQFVLPDVPIPIVHRVTRQLPQFLYDLGIGDLTCNSGYQAENLQEEIQERMEDRSEEKPVPSLDTLISKLSKRSTKVKGAGENRYADRHSLTEKAIFHQPGALSRMRSGKEKTIVAANHNSDQISVRMAECGKPVFTPLPRMSDEMLRKFLEKGLGSTSTVALDIGIQSHIPQGMPTVAFVNVMDTRIEDPLYSSLCGSYIDLGRDRAKTLCLPLVNFPMSKLAEDVDDVLNGLMLCTHFQDSTKFGVGKPAFQYGTLEFQEFKPSAYSDFSRVRDNWDAIAKQQNTPNDRILAGFSVLGAVSQAYNQALPVFKSVELVAPPKRKPVVATFQNPTTLGRSNTTRSFRMPTMDLPRSTGRDAPIPIVHRRNNNDVHGFDEATPARFSTCDSGLVADTTLAFAKMYQCKKDAKAGHVLATIDIQECVFEDNRRVALDWLAHGLASFKYDLQLTVDSNPFVGVTLGITVDAFDRLLPQISDEVIAVPLAFQLPTYLFPISKKGTFTQTIDFAAIAGYNFFPHVAAFGRPKIIVYIVSDNDLPASDTWMCLVELHMTRLESSTLACSPTLVLPQAFGGDLPLDLWRGPYTFPLGGGTKRLSTSLDIGTSTTTVSGWRTVSFPAAYALFLQGHGGSLVGEVVHTGSAAVSCALHLCISFGGAPPTLEEALVFPGFRLPSGEGKFHIKVQTPYGRLSTLTPDCALYVYLAGGPIAVAPMSVPYQFCIHLERLVDDGAPPRTIGLIREFNWATINNFKSDDITFAIPARLSDLVLTCGDVTMSTNPLALLIGSCGFFRGNLTVVLEWATFLKAGDKEGTVQLTTCRGMINNVKGVRNAIQKKVVNLSLVGSVSRYLNVGDFTGFAQSGGQVGYDEIFLEFSTNKAKQIRYLNINVELDENFELYGRTIIPLKNTAPAFASTSASAPNES</sequence>
<feature type="chain" id="PRO_0000037124" description="Protein 2A" evidence="1">
    <location>
        <begin position="1"/>
        <end status="unknown"/>
    </location>
</feature>
<feature type="chain" id="PRO_0000037125" description="Movement protein">
    <location>
        <begin status="unknown"/>
        <end position="1093"/>
    </location>
</feature>
<feature type="chain" id="PRO_0000037126" description="Coat protein">
    <location>
        <begin position="1094"/>
        <end position="1626"/>
    </location>
</feature>
<feature type="region of interest" description="Disordered" evidence="2">
    <location>
        <begin position="84"/>
        <end position="107"/>
    </location>
</feature>
<feature type="region of interest" description="Disordered" evidence="2">
    <location>
        <begin position="1042"/>
        <end position="1066"/>
    </location>
</feature>
<feature type="compositionally biased region" description="Polar residues" evidence="2">
    <location>
        <begin position="92"/>
        <end position="104"/>
    </location>
</feature>
<comment type="function">
    <molecule>Protein 2A</molecule>
    <text evidence="1">Implicated in RNA2 replication. Could also be required for nematode transmission of the virus (By similarity).</text>
</comment>
<comment type="function">
    <molecule>Movement protein</molecule>
    <text evidence="1">Transports viral genome to neighboring plant cells directly through plasmosdesmata, without any budding. The movement protein allows efficient cell to cell propagation, by bypassing the host cell wall barrier. Acts by forming a tubular structure at the host plasmodesmata, enlarging it enough to allow free passage of virion capsids (By similarity).</text>
</comment>
<comment type="subcellular location">
    <molecule>Movement protein</molecule>
    <subcellularLocation>
        <location evidence="1">Host cell junction</location>
        <location evidence="1">Host plasmodesma</location>
    </subcellularLocation>
    <text evidence="1">Assembles in tubules that are embedded within modified plasmodesmata.</text>
</comment>
<comment type="subcellular location">
    <molecule>Coat protein</molecule>
    <subcellularLocation>
        <location evidence="3">Virion</location>
    </subcellularLocation>
</comment>
<comment type="PTM">
    <text evidence="1">Specific enzymatic cleavages in vivo by the P1 encoded 3C-like protease yield mature proteins.</text>
</comment>
<comment type="miscellaneous">
    <text>Virions are comprised of 60 copies of the coat protein.</text>
</comment>
<comment type="similarity">
    <text evidence="3">Belongs to the nepoviruses RNA2 polyprotein family.</text>
</comment>
<dbReference type="EMBL" id="AF020051">
    <property type="protein sequence ID" value="AAD09329.2"/>
    <property type="molecule type" value="mRNA"/>
</dbReference>
<dbReference type="RefSeq" id="NP_612586.1">
    <property type="nucleotide sequence ID" value="NC_003502.1"/>
</dbReference>
<dbReference type="SMR" id="Q9YK98"/>
<dbReference type="GeneID" id="993415"/>
<dbReference type="KEGG" id="vg:993415"/>
<dbReference type="Proteomes" id="UP000007614">
    <property type="component" value="Genome"/>
</dbReference>
<dbReference type="GO" id="GO:0044219">
    <property type="term" value="C:host cell plasmodesma"/>
    <property type="evidence" value="ECO:0007669"/>
    <property type="project" value="UniProtKB-SubCell"/>
</dbReference>
<dbReference type="GO" id="GO:0019028">
    <property type="term" value="C:viral capsid"/>
    <property type="evidence" value="ECO:0007669"/>
    <property type="project" value="UniProtKB-KW"/>
</dbReference>
<dbReference type="GO" id="GO:0005198">
    <property type="term" value="F:structural molecule activity"/>
    <property type="evidence" value="ECO:0007669"/>
    <property type="project" value="InterPro"/>
</dbReference>
<dbReference type="GO" id="GO:0046740">
    <property type="term" value="P:transport of virus in host, cell to cell"/>
    <property type="evidence" value="ECO:0007669"/>
    <property type="project" value="UniProtKB-KW"/>
</dbReference>
<dbReference type="Gene3D" id="2.60.120.20">
    <property type="match status" value="2"/>
</dbReference>
<dbReference type="InterPro" id="IPR005054">
    <property type="entry name" value="Nepo_coat"/>
</dbReference>
<dbReference type="InterPro" id="IPR005305">
    <property type="entry name" value="Nepo_coat_C"/>
</dbReference>
<dbReference type="InterPro" id="IPR005306">
    <property type="entry name" value="Nepo_coat_N"/>
</dbReference>
<dbReference type="InterPro" id="IPR029053">
    <property type="entry name" value="Viral_coat"/>
</dbReference>
<dbReference type="Pfam" id="PF03391">
    <property type="entry name" value="Nepo_coat"/>
    <property type="match status" value="1"/>
</dbReference>
<dbReference type="Pfam" id="PF03688">
    <property type="entry name" value="Nepo_coat_C"/>
    <property type="match status" value="1"/>
</dbReference>
<dbReference type="Pfam" id="PF03689">
    <property type="entry name" value="Nepo_coat_N"/>
    <property type="match status" value="1"/>
</dbReference>
<dbReference type="SUPFAM" id="SSF88633">
    <property type="entry name" value="Positive stranded ssRNA viruses"/>
    <property type="match status" value="3"/>
</dbReference>
<protein>
    <recommendedName>
        <fullName>RNA2 polyprotein</fullName>
    </recommendedName>
    <alternativeName>
        <fullName>P2</fullName>
    </alternativeName>
    <component>
        <recommendedName>
            <fullName>Protein 2A</fullName>
        </recommendedName>
    </component>
    <component>
        <recommendedName>
            <fullName>Movement protein</fullName>
            <shortName>MP</shortName>
        </recommendedName>
    </component>
    <component>
        <recommendedName>
            <fullName>Coat protein</fullName>
            <shortName>CP</shortName>
        </recommendedName>
    </component>
</protein>